<gene>
    <name evidence="9" type="ORF">F47F2.1</name>
</gene>
<organism evidence="8">
    <name type="scientific">Caenorhabditis elegans</name>
    <dbReference type="NCBI Taxonomy" id="6239"/>
    <lineage>
        <taxon>Eukaryota</taxon>
        <taxon>Metazoa</taxon>
        <taxon>Ecdysozoa</taxon>
        <taxon>Nematoda</taxon>
        <taxon>Chromadorea</taxon>
        <taxon>Rhabditida</taxon>
        <taxon>Rhabditina</taxon>
        <taxon>Rhabditomorpha</taxon>
        <taxon>Rhabditoidea</taxon>
        <taxon>Rhabditidae</taxon>
        <taxon>Peloderinae</taxon>
        <taxon>Caenorhabditis</taxon>
    </lineage>
</organism>
<protein>
    <recommendedName>
        <fullName evidence="5">cAMP-dependent protein kinase, catalytic subunit-like</fullName>
        <ecNumber evidence="1">2.7.11.11</ecNumber>
    </recommendedName>
</protein>
<proteinExistence type="evidence at protein level"/>
<feature type="chain" id="PRO_0000432401" description="cAMP-dependent protein kinase, catalytic subunit-like">
    <location>
        <begin position="1"/>
        <end position="398"/>
    </location>
</feature>
<feature type="domain" description="Protein kinase" evidence="2">
    <location>
        <begin position="90"/>
        <end position="344"/>
    </location>
</feature>
<feature type="domain" description="AGC-kinase C-terminal" evidence="3">
    <location>
        <begin position="345"/>
        <end position="398"/>
    </location>
</feature>
<feature type="active site" description="Proton acceptor" evidence="2">
    <location>
        <position position="213"/>
    </location>
</feature>
<feature type="binding site" evidence="2">
    <location>
        <begin position="96"/>
        <end position="104"/>
    </location>
    <ligand>
        <name>ATP</name>
        <dbReference type="ChEBI" id="CHEBI:30616"/>
    </ligand>
</feature>
<feature type="binding site" evidence="2">
    <location>
        <position position="119"/>
    </location>
    <ligand>
        <name>ATP</name>
        <dbReference type="ChEBI" id="CHEBI:30616"/>
    </ligand>
</feature>
<feature type="splice variant" id="VSP_057511" description="In isoform c." evidence="6">
    <location>
        <begin position="1"/>
        <end position="73"/>
    </location>
</feature>
<feature type="sequence conflict" description="In Ref. 2; CAB41352." evidence="6" ref="2">
    <original>L</original>
    <variation>Q</variation>
    <location>
        <position position="27"/>
    </location>
</feature>
<sequence>MVILSHHKRSPPLLMRLFRICRFFRRLMSSSTSSVESVEDESCSNECSASFTFDTNNNSRGNNQVNELAEETHMKLSITPTRESFSLSQLERIITIGKGTFGRVELARDKITGAHYALKVLNIRRVVDMRQTQHVHNEKRVLLQLKHPFIVKMYASEKDSNHLYMIMEFVPGGEMFSYLRASRSFSNSMARFYASEIVCALEYIHSLGIVYRDLKPENLMLSKEGHIKMADFGFAKELRDRTYTICGTPDYLAPESLARTGHNKGVDWWALGILIYEMMVGKPPFRGKTTSEIYDAIIEHKLKFPRSFNLAAKDLVKKLLEVDRTQRIGCMKNGTQDVKDHKWFEKVNWDDTLHLRVEPPIVPTLYHPGDTGNFDDYEEDTTGGPLCSQRDRDLFAEW</sequence>
<comment type="catalytic activity">
    <reaction evidence="1">
        <text>L-seryl-[protein] + ATP = O-phospho-L-seryl-[protein] + ADP + H(+)</text>
        <dbReference type="Rhea" id="RHEA:17989"/>
        <dbReference type="Rhea" id="RHEA-COMP:9863"/>
        <dbReference type="Rhea" id="RHEA-COMP:11604"/>
        <dbReference type="ChEBI" id="CHEBI:15378"/>
        <dbReference type="ChEBI" id="CHEBI:29999"/>
        <dbReference type="ChEBI" id="CHEBI:30616"/>
        <dbReference type="ChEBI" id="CHEBI:83421"/>
        <dbReference type="ChEBI" id="CHEBI:456216"/>
        <dbReference type="EC" id="2.7.11.11"/>
    </reaction>
</comment>
<comment type="catalytic activity">
    <reaction evidence="1">
        <text>L-threonyl-[protein] + ATP = O-phospho-L-threonyl-[protein] + ADP + H(+)</text>
        <dbReference type="Rhea" id="RHEA:46608"/>
        <dbReference type="Rhea" id="RHEA-COMP:11060"/>
        <dbReference type="Rhea" id="RHEA-COMP:11605"/>
        <dbReference type="ChEBI" id="CHEBI:15378"/>
        <dbReference type="ChEBI" id="CHEBI:30013"/>
        <dbReference type="ChEBI" id="CHEBI:30616"/>
        <dbReference type="ChEBI" id="CHEBI:61977"/>
        <dbReference type="ChEBI" id="CHEBI:456216"/>
        <dbReference type="EC" id="2.7.11.11"/>
    </reaction>
</comment>
<comment type="alternative products">
    <event type="alternative splicing"/>
    <isoform>
        <id>Q7JP68-1</id>
        <name evidence="9">b</name>
        <sequence type="displayed"/>
    </isoform>
    <isoform>
        <id>Q7JP68-2</id>
        <name evidence="10">c</name>
        <sequence type="described" ref="VSP_057511"/>
    </isoform>
</comment>
<comment type="developmental stage">
    <text evidence="4">No obvious expression before embryo hatching but is expressed at later stages (at protein level).</text>
</comment>
<comment type="similarity">
    <text evidence="6">Belongs to the protein kinase superfamily. Ser/Thr protein kinase family. cAMP subfamily.</text>
</comment>
<comment type="sequence caution" evidence="6">
    <conflict type="erroneous initiation">
        <sequence resource="EMBL-CDS" id="CAB41352"/>
    </conflict>
    <text>Truncated N-terminus.</text>
</comment>
<accession>Q7JP68</accession>
<accession>Q20541</accession>
<accession>Q8MQ39</accession>
<accession>Q95ZT2</accession>
<evidence type="ECO:0000250" key="1">
    <source>
        <dbReference type="UniProtKB" id="P21137"/>
    </source>
</evidence>
<evidence type="ECO:0000255" key="2">
    <source>
        <dbReference type="PROSITE-ProRule" id="PRU00159"/>
    </source>
</evidence>
<evidence type="ECO:0000255" key="3">
    <source>
        <dbReference type="PROSITE-ProRule" id="PRU00618"/>
    </source>
</evidence>
<evidence type="ECO:0000269" key="4">
    <source>
    </source>
</evidence>
<evidence type="ECO:0000303" key="5">
    <source>
    </source>
</evidence>
<evidence type="ECO:0000305" key="6"/>
<evidence type="ECO:0000312" key="7">
    <source>
        <dbReference type="EMBL" id="CAB41352.1"/>
    </source>
</evidence>
<evidence type="ECO:0000312" key="8">
    <source>
        <dbReference type="Proteomes" id="UP000001940"/>
    </source>
</evidence>
<evidence type="ECO:0000312" key="9">
    <source>
        <dbReference type="WormBase" id="F47F2.1b"/>
    </source>
</evidence>
<evidence type="ECO:0000312" key="10">
    <source>
        <dbReference type="WormBase" id="F47F2.1c"/>
    </source>
</evidence>
<name>KAPC2_CAEEL</name>
<keyword id="KW-0025">Alternative splicing</keyword>
<keyword id="KW-0067">ATP-binding</keyword>
<keyword id="KW-0114">cAMP</keyword>
<keyword id="KW-0418">Kinase</keyword>
<keyword id="KW-0547">Nucleotide-binding</keyword>
<keyword id="KW-1185">Reference proteome</keyword>
<keyword id="KW-0723">Serine/threonine-protein kinase</keyword>
<keyword id="KW-0808">Transferase</keyword>
<dbReference type="EC" id="2.7.11.11" evidence="1"/>
<dbReference type="EMBL" id="FO081408">
    <property type="protein sequence ID" value="CCD71418.1"/>
    <property type="molecule type" value="Genomic_DNA"/>
</dbReference>
<dbReference type="EMBL" id="FO081408">
    <property type="protein sequence ID" value="CCD71419.1"/>
    <property type="molecule type" value="Genomic_DNA"/>
</dbReference>
<dbReference type="EMBL" id="FO081408">
    <property type="protein sequence ID" value="CCD71417.1"/>
    <property type="molecule type" value="Genomic_DNA"/>
</dbReference>
<dbReference type="EMBL" id="AJ012357">
    <property type="protein sequence ID" value="CAB41352.1"/>
    <property type="status" value="ALT_INIT"/>
    <property type="molecule type" value="mRNA"/>
</dbReference>
<dbReference type="PIR" id="T16391">
    <property type="entry name" value="T16391"/>
</dbReference>
<dbReference type="RefSeq" id="NP_001379961.1">
    <molecule id="Q7JP68-2"/>
    <property type="nucleotide sequence ID" value="NM_001392754.1"/>
</dbReference>
<dbReference type="RefSeq" id="NP_508671.2">
    <molecule id="Q7JP68-1"/>
    <property type="nucleotide sequence ID" value="NM_076270.7"/>
</dbReference>
<dbReference type="RefSeq" id="NP_508672.1">
    <property type="nucleotide sequence ID" value="NM_076271.3"/>
</dbReference>
<dbReference type="RefSeq" id="NP_741759.1">
    <property type="nucleotide sequence ID" value="NM_171660.3"/>
</dbReference>
<dbReference type="SMR" id="Q7JP68"/>
<dbReference type="FunCoup" id="Q7JP68">
    <property type="interactions" value="688"/>
</dbReference>
<dbReference type="STRING" id="6239.F47F2.1b.1"/>
<dbReference type="PaxDb" id="6239-F47F2.1b"/>
<dbReference type="EnsemblMetazoa" id="F47F2.1b.1">
    <molecule id="Q7JP68-1"/>
    <property type="protein sequence ID" value="F47F2.1b.1"/>
    <property type="gene ID" value="WBGene00018569"/>
</dbReference>
<dbReference type="EnsemblMetazoa" id="F47F2.1c.1">
    <molecule id="Q7JP68-2"/>
    <property type="protein sequence ID" value="F47F2.1c.1"/>
    <property type="gene ID" value="WBGene00018569"/>
</dbReference>
<dbReference type="EnsemblMetazoa" id="F47F2.1c.2">
    <molecule id="Q7JP68-2"/>
    <property type="protein sequence ID" value="F47F2.1c.2"/>
    <property type="gene ID" value="WBGene00018569"/>
</dbReference>
<dbReference type="EnsemblMetazoa" id="F47F2.1c.3">
    <molecule id="Q7JP68-2"/>
    <property type="protein sequence ID" value="F47F2.1c.3"/>
    <property type="gene ID" value="WBGene00018569"/>
</dbReference>
<dbReference type="EnsemblMetazoa" id="F47F2.1c.4">
    <molecule id="Q7JP68-2"/>
    <property type="protein sequence ID" value="F47F2.1c.4"/>
    <property type="gene ID" value="WBGene00018569"/>
</dbReference>
<dbReference type="GeneID" id="180673"/>
<dbReference type="KEGG" id="cel:CELE_F47F2.1"/>
<dbReference type="UCSC" id="F47F2.1b">
    <property type="organism name" value="c. elegans"/>
</dbReference>
<dbReference type="AGR" id="WB:WBGene00018569"/>
<dbReference type="CTD" id="180673"/>
<dbReference type="WormBase" id="F47F2.1b">
    <molecule id="Q7JP68-1"/>
    <property type="protein sequence ID" value="CE37114"/>
    <property type="gene ID" value="WBGene00018569"/>
</dbReference>
<dbReference type="WormBase" id="F47F2.1c">
    <molecule id="Q7JP68-2"/>
    <property type="protein sequence ID" value="CE31171"/>
    <property type="gene ID" value="WBGene00018569"/>
</dbReference>
<dbReference type="eggNOG" id="KOG0616">
    <property type="taxonomic scope" value="Eukaryota"/>
</dbReference>
<dbReference type="GeneTree" id="ENSGT00940000159832"/>
<dbReference type="InParanoid" id="Q7JP68"/>
<dbReference type="OMA" id="NSMARFY"/>
<dbReference type="OrthoDB" id="63267at2759"/>
<dbReference type="PhylomeDB" id="Q7JP68"/>
<dbReference type="PRO" id="PR:Q7JP68"/>
<dbReference type="Proteomes" id="UP000001940">
    <property type="component" value="Chromosome X"/>
</dbReference>
<dbReference type="Bgee" id="WBGene00018569">
    <property type="expression patterns" value="Expressed in larva and 3 other cell types or tissues"/>
</dbReference>
<dbReference type="ExpressionAtlas" id="Q7JP68">
    <property type="expression patterns" value="baseline and differential"/>
</dbReference>
<dbReference type="GO" id="GO:0005952">
    <property type="term" value="C:cAMP-dependent protein kinase complex"/>
    <property type="evidence" value="ECO:0000318"/>
    <property type="project" value="GO_Central"/>
</dbReference>
<dbReference type="GO" id="GO:0005737">
    <property type="term" value="C:cytoplasm"/>
    <property type="evidence" value="ECO:0007005"/>
    <property type="project" value="WormBase"/>
</dbReference>
<dbReference type="GO" id="GO:0005829">
    <property type="term" value="C:cytosol"/>
    <property type="evidence" value="ECO:0000318"/>
    <property type="project" value="GO_Central"/>
</dbReference>
<dbReference type="GO" id="GO:0005524">
    <property type="term" value="F:ATP binding"/>
    <property type="evidence" value="ECO:0007669"/>
    <property type="project" value="UniProtKB-KW"/>
</dbReference>
<dbReference type="GO" id="GO:0004691">
    <property type="term" value="F:cAMP-dependent protein kinase activity"/>
    <property type="evidence" value="ECO:0000318"/>
    <property type="project" value="GO_Central"/>
</dbReference>
<dbReference type="GO" id="GO:0106310">
    <property type="term" value="F:protein serine kinase activity"/>
    <property type="evidence" value="ECO:0007669"/>
    <property type="project" value="RHEA"/>
</dbReference>
<dbReference type="GO" id="GO:0007155">
    <property type="term" value="P:cell adhesion"/>
    <property type="evidence" value="ECO:0000318"/>
    <property type="project" value="GO_Central"/>
</dbReference>
<dbReference type="GO" id="GO:0007165">
    <property type="term" value="P:signal transduction"/>
    <property type="evidence" value="ECO:0000318"/>
    <property type="project" value="GO_Central"/>
</dbReference>
<dbReference type="FunFam" id="3.30.200.20:FF:000042">
    <property type="entry name" value="Aurora kinase A"/>
    <property type="match status" value="1"/>
</dbReference>
<dbReference type="FunFam" id="1.10.510.10:FF:000005">
    <property type="entry name" value="cAMP-dependent protein kinase catalytic subunit alpha"/>
    <property type="match status" value="1"/>
</dbReference>
<dbReference type="Gene3D" id="3.30.200.20">
    <property type="entry name" value="Phosphorylase Kinase, domain 1"/>
    <property type="match status" value="1"/>
</dbReference>
<dbReference type="Gene3D" id="1.10.510.10">
    <property type="entry name" value="Transferase(Phosphotransferase) domain 1"/>
    <property type="match status" value="1"/>
</dbReference>
<dbReference type="InterPro" id="IPR000961">
    <property type="entry name" value="AGC-kinase_C"/>
</dbReference>
<dbReference type="InterPro" id="IPR011009">
    <property type="entry name" value="Kinase-like_dom_sf"/>
</dbReference>
<dbReference type="InterPro" id="IPR000719">
    <property type="entry name" value="Prot_kinase_dom"/>
</dbReference>
<dbReference type="InterPro" id="IPR017441">
    <property type="entry name" value="Protein_kinase_ATP_BS"/>
</dbReference>
<dbReference type="InterPro" id="IPR008271">
    <property type="entry name" value="Ser/Thr_kinase_AS"/>
</dbReference>
<dbReference type="PANTHER" id="PTHR24353:SF37">
    <property type="entry name" value="CAMP-DEPENDENT PROTEIN KINASE CATALYTIC SUBUNIT PRKX"/>
    <property type="match status" value="1"/>
</dbReference>
<dbReference type="PANTHER" id="PTHR24353">
    <property type="entry name" value="CYCLIC NUCLEOTIDE-DEPENDENT PROTEIN KINASE"/>
    <property type="match status" value="1"/>
</dbReference>
<dbReference type="Pfam" id="PF00069">
    <property type="entry name" value="Pkinase"/>
    <property type="match status" value="1"/>
</dbReference>
<dbReference type="SMART" id="SM00133">
    <property type="entry name" value="S_TK_X"/>
    <property type="match status" value="1"/>
</dbReference>
<dbReference type="SMART" id="SM00220">
    <property type="entry name" value="S_TKc"/>
    <property type="match status" value="1"/>
</dbReference>
<dbReference type="SUPFAM" id="SSF56112">
    <property type="entry name" value="Protein kinase-like (PK-like)"/>
    <property type="match status" value="1"/>
</dbReference>
<dbReference type="PROSITE" id="PS51285">
    <property type="entry name" value="AGC_KINASE_CTER"/>
    <property type="match status" value="1"/>
</dbReference>
<dbReference type="PROSITE" id="PS00107">
    <property type="entry name" value="PROTEIN_KINASE_ATP"/>
    <property type="match status" value="1"/>
</dbReference>
<dbReference type="PROSITE" id="PS50011">
    <property type="entry name" value="PROTEIN_KINASE_DOM"/>
    <property type="match status" value="1"/>
</dbReference>
<dbReference type="PROSITE" id="PS00108">
    <property type="entry name" value="PROTEIN_KINASE_ST"/>
    <property type="match status" value="1"/>
</dbReference>
<reference evidence="8" key="1">
    <citation type="journal article" date="1998" name="Science">
        <title>Genome sequence of the nematode C. elegans: a platform for investigating biology.</title>
        <authorList>
            <consortium name="The C. elegans sequencing consortium"/>
        </authorList>
    </citation>
    <scope>NUCLEOTIDE SEQUENCE [LARGE SCALE GENOMIC DNA]</scope>
    <scope>ALTERNATIVE SPLICING</scope>
    <source>
        <strain evidence="8">Bristol N2</strain>
    </source>
</reference>
<reference evidence="7" key="2">
    <citation type="journal article" date="1999" name="Biochem. J.">
        <title>Organization and alternative splicing of the Caenorhabditis elegans cyclic AMP-dependent protein kinase (PK-A) catalytic subunit gene (kin-1).</title>
        <authorList>
            <person name="Tabish M."/>
            <person name="Clegg R.A."/>
            <person name="Rees H.H."/>
            <person name="Fisher M.J."/>
        </authorList>
    </citation>
    <scope>NUCLEOTIDE SEQUENCE [MRNA] OF 27-398</scope>
    <source>
        <strain evidence="7">Bristol N2</strain>
    </source>
</reference>
<reference evidence="6" key="3">
    <citation type="journal article" date="2006" name="Cell. Signal.">
        <title>Expression of multiple isoforms of the cAMP-dependent protein kinase (PK-A) catalytic subunit in the nematode, Caenorhabditis elegans.</title>
        <authorList>
            <person name="Bowen L.C."/>
            <person name="Bicknell A.V."/>
            <person name="Tabish M."/>
            <person name="Clegg R.A."/>
            <person name="Rees H.H."/>
            <person name="Fisher M.J."/>
        </authorList>
    </citation>
    <scope>DEVELOPMENTAL STAGE</scope>
</reference>